<feature type="chain" id="PRO_0000214186" description="UPF0283 membrane protein YcjF">
    <location>
        <begin position="1"/>
        <end position="344"/>
    </location>
</feature>
<feature type="topological domain" description="Periplasmic" evidence="2">
    <location>
        <begin position="1"/>
        <end position="69"/>
    </location>
</feature>
<feature type="transmembrane region" description="Helical" evidence="2">
    <location>
        <begin position="70"/>
        <end position="90"/>
    </location>
</feature>
<feature type="topological domain" description="Cytoplasmic" evidence="2">
    <location>
        <begin position="91"/>
        <end position="99"/>
    </location>
</feature>
<feature type="transmembrane region" description="Helical" evidence="2">
    <location>
        <begin position="100"/>
        <end position="120"/>
    </location>
</feature>
<feature type="topological domain" description="Periplasmic" evidence="2">
    <location>
        <begin position="121"/>
        <end position="212"/>
    </location>
</feature>
<feature type="transmembrane region" description="Helical" evidence="2">
    <location>
        <begin position="213"/>
        <end position="233"/>
    </location>
</feature>
<feature type="topological domain" description="Cytoplasmic" evidence="2">
    <location>
        <begin position="234"/>
        <end position="344"/>
    </location>
</feature>
<reference key="1">
    <citation type="journal article" date="1999" name="Mol. Microbiol.">
        <title>Spontaneous tandem amplification and deletion of the Shiga toxin operon in Shigella dysenteriae 1.</title>
        <authorList>
            <person name="McDonough M.A."/>
            <person name="Butterton J.R."/>
        </authorList>
    </citation>
    <scope>NUCLEOTIDE SEQUENCE [GENOMIC DNA]</scope>
    <source>
        <strain>3818 / Type 1</strain>
    </source>
</reference>
<accession>Q9LA29</accession>
<sequence>MTEPLKPRIDFDGPLEVDQNPKFRAQQTFDENQAQNFAPATLDEAQEEEGQVEAVMDAALRPKRSLWRKMVMGGLALFGASVVGQGVQWTMNACQTQDWVALGGCAAGALIIGAGVGSVVTEWRRLWRLRQRAHERDEARDLLHSHGTGKGRVFCEKLAQQAGIDQSHPALQRWYASIHETQNDREVVSLYAHLVQPVLDAQARREISRSAAESTLMIAVSPLALVDMAFIAWRNLRLINRIATLYGIELGYYSRLRLFKLVLLNIAFAGASELVREVGMDWMSQDLAARLSTRAAQGIGAGLLTARLGIKAMELCRPLPWIDDDKPRLGDFRRQLIGQVKETL</sequence>
<dbReference type="EMBL" id="AF153317">
    <property type="protein sequence ID" value="AAF28132.1"/>
    <property type="molecule type" value="Genomic_DNA"/>
</dbReference>
<dbReference type="RefSeq" id="WP_000138724.1">
    <property type="nucleotide sequence ID" value="NZ_UAUQ01000013.1"/>
</dbReference>
<dbReference type="OMA" id="MFFIAWR"/>
<dbReference type="GO" id="GO:0005886">
    <property type="term" value="C:plasma membrane"/>
    <property type="evidence" value="ECO:0007669"/>
    <property type="project" value="UniProtKB-SubCell"/>
</dbReference>
<dbReference type="HAMAP" id="MF_01085">
    <property type="entry name" value="UPF0283"/>
    <property type="match status" value="1"/>
</dbReference>
<dbReference type="InterPro" id="IPR021147">
    <property type="entry name" value="DUF697"/>
</dbReference>
<dbReference type="InterPro" id="IPR006507">
    <property type="entry name" value="UPF0283"/>
</dbReference>
<dbReference type="NCBIfam" id="TIGR01620">
    <property type="entry name" value="hyp_HI0043"/>
    <property type="match status" value="1"/>
</dbReference>
<dbReference type="PANTHER" id="PTHR39342">
    <property type="entry name" value="UPF0283 MEMBRANE PROTEIN YCJF"/>
    <property type="match status" value="1"/>
</dbReference>
<dbReference type="PANTHER" id="PTHR39342:SF1">
    <property type="entry name" value="UPF0283 MEMBRANE PROTEIN YCJF"/>
    <property type="match status" value="1"/>
</dbReference>
<dbReference type="Pfam" id="PF05128">
    <property type="entry name" value="DUF697"/>
    <property type="match status" value="1"/>
</dbReference>
<proteinExistence type="inferred from homology"/>
<protein>
    <recommendedName>
        <fullName>UPF0283 membrane protein YcjF</fullName>
    </recommendedName>
</protein>
<keyword id="KW-0997">Cell inner membrane</keyword>
<keyword id="KW-1003">Cell membrane</keyword>
<keyword id="KW-0472">Membrane</keyword>
<keyword id="KW-0812">Transmembrane</keyword>
<keyword id="KW-1133">Transmembrane helix</keyword>
<name>YCJF_SHIDY</name>
<organism>
    <name type="scientific">Shigella dysenteriae</name>
    <dbReference type="NCBI Taxonomy" id="622"/>
    <lineage>
        <taxon>Bacteria</taxon>
        <taxon>Pseudomonadati</taxon>
        <taxon>Pseudomonadota</taxon>
        <taxon>Gammaproteobacteria</taxon>
        <taxon>Enterobacterales</taxon>
        <taxon>Enterobacteriaceae</taxon>
        <taxon>Shigella</taxon>
    </lineage>
</organism>
<evidence type="ECO:0000250" key="1"/>
<evidence type="ECO:0000255" key="2"/>
<evidence type="ECO:0000305" key="3"/>
<comment type="subcellular location">
    <subcellularLocation>
        <location evidence="1">Cell inner membrane</location>
        <topology evidence="1">Multi-pass membrane protein</topology>
    </subcellularLocation>
</comment>
<comment type="similarity">
    <text evidence="3">Belongs to the UPF0283 family.</text>
</comment>
<gene>
    <name type="primary">ycjF</name>
</gene>